<protein>
    <recommendedName>
        <fullName evidence="1">D-aminoacyl-tRNA deacylase</fullName>
        <shortName evidence="1">DTD</shortName>
        <ecNumber evidence="1">3.1.1.96</ecNumber>
    </recommendedName>
    <alternativeName>
        <fullName evidence="1">Gly-tRNA(Ala) deacylase</fullName>
    </alternativeName>
</protein>
<reference key="1">
    <citation type="submission" date="2008-08" db="EMBL/GenBank/DDBJ databases">
        <title>Complete sequence of Vibrio fischeri strain MJ11.</title>
        <authorList>
            <person name="Mandel M.J."/>
            <person name="Stabb E.V."/>
            <person name="Ruby E.G."/>
            <person name="Ferriera S."/>
            <person name="Johnson J."/>
            <person name="Kravitz S."/>
            <person name="Beeson K."/>
            <person name="Sutton G."/>
            <person name="Rogers Y.-H."/>
            <person name="Friedman R."/>
            <person name="Frazier M."/>
            <person name="Venter J.C."/>
        </authorList>
    </citation>
    <scope>NUCLEOTIDE SEQUENCE [LARGE SCALE GENOMIC DNA]</scope>
    <source>
        <strain>MJ11</strain>
    </source>
</reference>
<evidence type="ECO:0000255" key="1">
    <source>
        <dbReference type="HAMAP-Rule" id="MF_00518"/>
    </source>
</evidence>
<feature type="chain" id="PRO_1000127592" description="D-aminoacyl-tRNA deacylase">
    <location>
        <begin position="1"/>
        <end position="144"/>
    </location>
</feature>
<feature type="short sequence motif" description="Gly-cisPro motif, important for rejection of L-amino acids" evidence="1">
    <location>
        <begin position="136"/>
        <end position="137"/>
    </location>
</feature>
<dbReference type="EC" id="3.1.1.96" evidence="1"/>
<dbReference type="EMBL" id="CP001139">
    <property type="protein sequence ID" value="ACH64851.1"/>
    <property type="molecule type" value="Genomic_DNA"/>
</dbReference>
<dbReference type="RefSeq" id="WP_011260970.1">
    <property type="nucleotide sequence ID" value="NC_011184.1"/>
</dbReference>
<dbReference type="SMR" id="B5FFD2"/>
<dbReference type="GeneID" id="54162728"/>
<dbReference type="KEGG" id="vfm:VFMJ11_0099"/>
<dbReference type="HOGENOM" id="CLU_076901_1_1_6"/>
<dbReference type="Proteomes" id="UP000001857">
    <property type="component" value="Chromosome I"/>
</dbReference>
<dbReference type="GO" id="GO:0005737">
    <property type="term" value="C:cytoplasm"/>
    <property type="evidence" value="ECO:0007669"/>
    <property type="project" value="UniProtKB-SubCell"/>
</dbReference>
<dbReference type="GO" id="GO:0051500">
    <property type="term" value="F:D-tyrosyl-tRNA(Tyr) deacylase activity"/>
    <property type="evidence" value="ECO:0007669"/>
    <property type="project" value="TreeGrafter"/>
</dbReference>
<dbReference type="GO" id="GO:0106026">
    <property type="term" value="F:Gly-tRNA(Ala) deacylase activity"/>
    <property type="evidence" value="ECO:0007669"/>
    <property type="project" value="UniProtKB-UniRule"/>
</dbReference>
<dbReference type="GO" id="GO:0043908">
    <property type="term" value="F:Ser(Gly)-tRNA(Ala) hydrolase activity"/>
    <property type="evidence" value="ECO:0007669"/>
    <property type="project" value="UniProtKB-UniRule"/>
</dbReference>
<dbReference type="GO" id="GO:0000049">
    <property type="term" value="F:tRNA binding"/>
    <property type="evidence" value="ECO:0007669"/>
    <property type="project" value="UniProtKB-UniRule"/>
</dbReference>
<dbReference type="GO" id="GO:0019478">
    <property type="term" value="P:D-amino acid catabolic process"/>
    <property type="evidence" value="ECO:0007669"/>
    <property type="project" value="UniProtKB-UniRule"/>
</dbReference>
<dbReference type="CDD" id="cd00563">
    <property type="entry name" value="Dtyr_deacylase"/>
    <property type="match status" value="1"/>
</dbReference>
<dbReference type="FunFam" id="3.50.80.10:FF:000001">
    <property type="entry name" value="D-aminoacyl-tRNA deacylase"/>
    <property type="match status" value="1"/>
</dbReference>
<dbReference type="Gene3D" id="3.50.80.10">
    <property type="entry name" value="D-tyrosyl-tRNA(Tyr) deacylase"/>
    <property type="match status" value="1"/>
</dbReference>
<dbReference type="HAMAP" id="MF_00518">
    <property type="entry name" value="Deacylase_Dtd"/>
    <property type="match status" value="1"/>
</dbReference>
<dbReference type="InterPro" id="IPR003732">
    <property type="entry name" value="Daa-tRNA_deacyls_DTD"/>
</dbReference>
<dbReference type="InterPro" id="IPR023509">
    <property type="entry name" value="DTD-like_sf"/>
</dbReference>
<dbReference type="NCBIfam" id="TIGR00256">
    <property type="entry name" value="D-aminoacyl-tRNA deacylase"/>
    <property type="match status" value="1"/>
</dbReference>
<dbReference type="PANTHER" id="PTHR10472:SF5">
    <property type="entry name" value="D-AMINOACYL-TRNA DEACYLASE 1"/>
    <property type="match status" value="1"/>
</dbReference>
<dbReference type="PANTHER" id="PTHR10472">
    <property type="entry name" value="D-TYROSYL-TRNA TYR DEACYLASE"/>
    <property type="match status" value="1"/>
</dbReference>
<dbReference type="Pfam" id="PF02580">
    <property type="entry name" value="Tyr_Deacylase"/>
    <property type="match status" value="1"/>
</dbReference>
<dbReference type="SUPFAM" id="SSF69500">
    <property type="entry name" value="DTD-like"/>
    <property type="match status" value="1"/>
</dbReference>
<comment type="function">
    <text evidence="1">An aminoacyl-tRNA editing enzyme that deacylates mischarged D-aminoacyl-tRNAs. Also deacylates mischarged glycyl-tRNA(Ala), protecting cells against glycine mischarging by AlaRS. Acts via tRNA-based rather than protein-based catalysis; rejects L-amino acids rather than detecting D-amino acids in the active site. By recycling D-aminoacyl-tRNA to D-amino acids and free tRNA molecules, this enzyme counteracts the toxicity associated with the formation of D-aminoacyl-tRNA entities in vivo and helps enforce protein L-homochirality.</text>
</comment>
<comment type="catalytic activity">
    <reaction evidence="1">
        <text>glycyl-tRNA(Ala) + H2O = tRNA(Ala) + glycine + H(+)</text>
        <dbReference type="Rhea" id="RHEA:53744"/>
        <dbReference type="Rhea" id="RHEA-COMP:9657"/>
        <dbReference type="Rhea" id="RHEA-COMP:13640"/>
        <dbReference type="ChEBI" id="CHEBI:15377"/>
        <dbReference type="ChEBI" id="CHEBI:15378"/>
        <dbReference type="ChEBI" id="CHEBI:57305"/>
        <dbReference type="ChEBI" id="CHEBI:78442"/>
        <dbReference type="ChEBI" id="CHEBI:78522"/>
        <dbReference type="EC" id="3.1.1.96"/>
    </reaction>
</comment>
<comment type="catalytic activity">
    <reaction evidence="1">
        <text>a D-aminoacyl-tRNA + H2O = a tRNA + a D-alpha-amino acid + H(+)</text>
        <dbReference type="Rhea" id="RHEA:13953"/>
        <dbReference type="Rhea" id="RHEA-COMP:10123"/>
        <dbReference type="Rhea" id="RHEA-COMP:10124"/>
        <dbReference type="ChEBI" id="CHEBI:15377"/>
        <dbReference type="ChEBI" id="CHEBI:15378"/>
        <dbReference type="ChEBI" id="CHEBI:59871"/>
        <dbReference type="ChEBI" id="CHEBI:78442"/>
        <dbReference type="ChEBI" id="CHEBI:79333"/>
        <dbReference type="EC" id="3.1.1.96"/>
    </reaction>
</comment>
<comment type="subunit">
    <text evidence="1">Homodimer.</text>
</comment>
<comment type="subcellular location">
    <subcellularLocation>
        <location evidence="1">Cytoplasm</location>
    </subcellularLocation>
</comment>
<comment type="domain">
    <text evidence="1">A Gly-cisPro motif from one monomer fits into the active site of the other monomer to allow specific chiral rejection of L-amino acids.</text>
</comment>
<comment type="similarity">
    <text evidence="1">Belongs to the DTD family.</text>
</comment>
<organism>
    <name type="scientific">Aliivibrio fischeri (strain MJ11)</name>
    <name type="common">Vibrio fischeri</name>
    <dbReference type="NCBI Taxonomy" id="388396"/>
    <lineage>
        <taxon>Bacteria</taxon>
        <taxon>Pseudomonadati</taxon>
        <taxon>Pseudomonadota</taxon>
        <taxon>Gammaproteobacteria</taxon>
        <taxon>Vibrionales</taxon>
        <taxon>Vibrionaceae</taxon>
        <taxon>Aliivibrio</taxon>
    </lineage>
</organism>
<gene>
    <name evidence="1" type="primary">dtd</name>
    <name type="ordered locus">VFMJ11_0099</name>
</gene>
<keyword id="KW-0963">Cytoplasm</keyword>
<keyword id="KW-0378">Hydrolase</keyword>
<keyword id="KW-0694">RNA-binding</keyword>
<keyword id="KW-0820">tRNA-binding</keyword>
<accession>B5FFD2</accession>
<sequence length="144" mass="16112">MIALIQRVSEAAVKVDGEVTGEINQGLLILLGVEREDDEAKAKRLMERVLTYRVFEDQDGKMNLNVQQVNGSVLVVSQFTLPADTKKGTRPGFSKGAHPVDAERLYDYFSDLCEEKLHTQRGRFAADMKVSLVNDGPVTFWLQV</sequence>
<proteinExistence type="inferred from homology"/>
<name>DTD_ALIFM</name>